<feature type="chain" id="PRO_0000212416" description="Man(5)GlcNAc(2)-PP-dolichol translocation protein RFT1">
    <location>
        <begin position="1"/>
        <end position="551"/>
    </location>
</feature>
<feature type="transmembrane region" description="Helical" evidence="2">
    <location>
        <begin position="16"/>
        <end position="36"/>
    </location>
</feature>
<feature type="transmembrane region" description="Helical" evidence="2">
    <location>
        <begin position="40"/>
        <end position="60"/>
    </location>
</feature>
<feature type="transmembrane region" description="Helical" evidence="2">
    <location>
        <begin position="95"/>
        <end position="115"/>
    </location>
</feature>
<feature type="transmembrane region" description="Helical" evidence="2">
    <location>
        <begin position="123"/>
        <end position="143"/>
    </location>
</feature>
<feature type="transmembrane region" description="Helical" evidence="2">
    <location>
        <begin position="168"/>
        <end position="185"/>
    </location>
</feature>
<feature type="transmembrane region" description="Helical" evidence="2">
    <location>
        <begin position="204"/>
        <end position="224"/>
    </location>
</feature>
<feature type="transmembrane region" description="Helical" evidence="2">
    <location>
        <begin position="343"/>
        <end position="363"/>
    </location>
</feature>
<feature type="transmembrane region" description="Helical" evidence="2">
    <location>
        <begin position="391"/>
        <end position="411"/>
    </location>
</feature>
<feature type="transmembrane region" description="Helical" evidence="2">
    <location>
        <begin position="421"/>
        <end position="441"/>
    </location>
</feature>
<feature type="transmembrane region" description="Helical" evidence="2">
    <location>
        <begin position="448"/>
        <end position="468"/>
    </location>
</feature>
<feature type="transmembrane region" description="Helical" evidence="2">
    <location>
        <begin position="489"/>
        <end position="509"/>
    </location>
</feature>
<feature type="transmembrane region" description="Helical" evidence="2">
    <location>
        <begin position="510"/>
        <end position="530"/>
    </location>
</feature>
<protein>
    <recommendedName>
        <fullName evidence="1">Man(5)GlcNAc(2)-PP-dolichol translocation protein RFT1</fullName>
    </recommendedName>
</protein>
<organism>
    <name type="scientific">Candida glabrata (strain ATCC 2001 / BCRC 20586 / JCM 3761 / NBRC 0622 / NRRL Y-65 / CBS 138)</name>
    <name type="common">Yeast</name>
    <name type="synonym">Nakaseomyces glabratus</name>
    <dbReference type="NCBI Taxonomy" id="284593"/>
    <lineage>
        <taxon>Eukaryota</taxon>
        <taxon>Fungi</taxon>
        <taxon>Dikarya</taxon>
        <taxon>Ascomycota</taxon>
        <taxon>Saccharomycotina</taxon>
        <taxon>Saccharomycetes</taxon>
        <taxon>Saccharomycetales</taxon>
        <taxon>Saccharomycetaceae</taxon>
        <taxon>Nakaseomyces</taxon>
    </lineage>
</organism>
<keyword id="KW-0256">Endoplasmic reticulum</keyword>
<keyword id="KW-0472">Membrane</keyword>
<keyword id="KW-1185">Reference proteome</keyword>
<keyword id="KW-0762">Sugar transport</keyword>
<keyword id="KW-0812">Transmembrane</keyword>
<keyword id="KW-1133">Transmembrane helix</keyword>
<keyword id="KW-0813">Transport</keyword>
<comment type="function">
    <text evidence="1">Intramembrane glycolipid transporter that operates in the biosynthetic pathway of dolichol-linked oligosaccharides, the glycan precursors employed in protein asparagine (N)-glycosylation. The sequential addition of sugars to dolichol pyrophosphate produces dolichol-linked oligosaccharides containing fourteen sugars, including two GlcNAcs, nine mannoses and three glucoses. Once assembled, the oligosaccharide is transferred from the lipid to nascent proteins by oligosaccharyltransferases. The assembly of dolichol-linked oligosaccharides begins on the cytosolic side of the endoplasmic reticulum membrane and finishes in its lumen. RFT1 could mediate the translocation of the cytosolically oriented intermediate DolPP-GlcNAc2Man5, produced by ALG11, into the ER lumen where dolichol-linked oligosaccharides assembly continues. However, the intramembrane lipid transporter activity could not be confirmed in vitro.</text>
</comment>
<comment type="pathway">
    <text evidence="1">Protein modification; protein glycosylation.</text>
</comment>
<comment type="subcellular location">
    <subcellularLocation>
        <location evidence="1">Endoplasmic reticulum membrane</location>
        <topology evidence="2">Multi-pass membrane protein</topology>
    </subcellularLocation>
</comment>
<comment type="similarity">
    <text evidence="3">Belongs to the RFT1 family.</text>
</comment>
<gene>
    <name type="primary">RFT1</name>
    <name type="ordered locus">CAGL0J04378g</name>
</gene>
<dbReference type="EMBL" id="CR380956">
    <property type="protein sequence ID" value="CAG60845.1"/>
    <property type="molecule type" value="Genomic_DNA"/>
</dbReference>
<dbReference type="RefSeq" id="XP_447896.1">
    <property type="nucleotide sequence ID" value="XM_447896.1"/>
</dbReference>
<dbReference type="SMR" id="Q6FPE8"/>
<dbReference type="FunCoup" id="Q6FPE8">
    <property type="interactions" value="735"/>
</dbReference>
<dbReference type="STRING" id="284593.Q6FPE8"/>
<dbReference type="EnsemblFungi" id="CAGL0J04378g-T">
    <property type="protein sequence ID" value="CAGL0J04378g-T-p1"/>
    <property type="gene ID" value="CAGL0J04378g"/>
</dbReference>
<dbReference type="KEGG" id="cgr:2889634"/>
<dbReference type="CGD" id="CAL0132928">
    <property type="gene designation" value="CAGL0J04378g"/>
</dbReference>
<dbReference type="VEuPathDB" id="FungiDB:CAGL0J04378g"/>
<dbReference type="eggNOG" id="KOG2864">
    <property type="taxonomic scope" value="Eukaryota"/>
</dbReference>
<dbReference type="HOGENOM" id="CLU_023360_3_0_1"/>
<dbReference type="InParanoid" id="Q6FPE8"/>
<dbReference type="OMA" id="WPGKLFG"/>
<dbReference type="UniPathway" id="UPA00378"/>
<dbReference type="Proteomes" id="UP000002428">
    <property type="component" value="Chromosome J"/>
</dbReference>
<dbReference type="GO" id="GO:0005789">
    <property type="term" value="C:endoplasmic reticulum membrane"/>
    <property type="evidence" value="ECO:0007669"/>
    <property type="project" value="UniProtKB-SubCell"/>
</dbReference>
<dbReference type="GO" id="GO:0140327">
    <property type="term" value="F:flippase activity"/>
    <property type="evidence" value="ECO:0007669"/>
    <property type="project" value="EnsemblFungi"/>
</dbReference>
<dbReference type="GO" id="GO:0006488">
    <property type="term" value="P:dolichol-linked oligosaccharide biosynthetic process"/>
    <property type="evidence" value="ECO:0000250"/>
    <property type="project" value="UniProtKB"/>
</dbReference>
<dbReference type="GO" id="GO:0034203">
    <property type="term" value="P:glycolipid translocation"/>
    <property type="evidence" value="ECO:0000250"/>
    <property type="project" value="UniProtKB"/>
</dbReference>
<dbReference type="GO" id="GO:0006487">
    <property type="term" value="P:protein N-linked glycosylation"/>
    <property type="evidence" value="ECO:0000250"/>
    <property type="project" value="UniProtKB"/>
</dbReference>
<dbReference type="InterPro" id="IPR007594">
    <property type="entry name" value="RFT1"/>
</dbReference>
<dbReference type="PANTHER" id="PTHR13117">
    <property type="entry name" value="ENDOPLASMIC RETICULUM MULTISPAN TRANSMEMBRANE PROTEIN-RELATED"/>
    <property type="match status" value="1"/>
</dbReference>
<dbReference type="PANTHER" id="PTHR13117:SF5">
    <property type="entry name" value="PROTEIN RFT1 HOMOLOG"/>
    <property type="match status" value="1"/>
</dbReference>
<dbReference type="Pfam" id="PF04506">
    <property type="entry name" value="Rft-1"/>
    <property type="match status" value="1"/>
</dbReference>
<proteinExistence type="inferred from homology"/>
<name>RFT1_CANGA</name>
<sequence>MSGADILEKTTRGATFLMMGQLFSKIVTFLLNNTLVRYLSPRIFGITAFLEFIVGTVLFFSREAIRLSTQRIADGNDADNDHDHDRDDSALQVCVNFAMIPLFIGIPLSIGLIAWQYHNINGYFVTLPFFQWSVFAIWVGIILELVNEPLFVLNQHFLNYGARSRYESIAVTANCLVNFTVVYSYEKKLILTSYFDDSERFREGIAILAFALGKLAYAATLLMCYYYNYLMNFKSNKPFKLSLQKIKSKVNEKQTYYFRSDILEHFKKVYFQLCFKHLLTEGDKLIINTFCTVEEQGIYSLLSNYGSLITRLLFAPIEESLRLLLAVLLSKKDSKNLQLSMKVLVNLTKFYLYLSLLVMIFGPNNSSYLLQFLIGSKWSTNSVLHAIRVYCVYIPFLSFNGIFEAFLASVATGDQILRHSYFMMMCSFAFLINSWIFIEYLDLSVNGLIISNIINMSLRIIYSFSFIVKFYRELHTESSIFMNFTNFKATLGAAALVAILNWQMVGYVSSFNGFITSATLALILLSVILIKERATLNELIINRRAANMKSV</sequence>
<reference key="1">
    <citation type="journal article" date="2004" name="Nature">
        <title>Genome evolution in yeasts.</title>
        <authorList>
            <person name="Dujon B."/>
            <person name="Sherman D."/>
            <person name="Fischer G."/>
            <person name="Durrens P."/>
            <person name="Casaregola S."/>
            <person name="Lafontaine I."/>
            <person name="de Montigny J."/>
            <person name="Marck C."/>
            <person name="Neuveglise C."/>
            <person name="Talla E."/>
            <person name="Goffard N."/>
            <person name="Frangeul L."/>
            <person name="Aigle M."/>
            <person name="Anthouard V."/>
            <person name="Babour A."/>
            <person name="Barbe V."/>
            <person name="Barnay S."/>
            <person name="Blanchin S."/>
            <person name="Beckerich J.-M."/>
            <person name="Beyne E."/>
            <person name="Bleykasten C."/>
            <person name="Boisrame A."/>
            <person name="Boyer J."/>
            <person name="Cattolico L."/>
            <person name="Confanioleri F."/>
            <person name="de Daruvar A."/>
            <person name="Despons L."/>
            <person name="Fabre E."/>
            <person name="Fairhead C."/>
            <person name="Ferry-Dumazet H."/>
            <person name="Groppi A."/>
            <person name="Hantraye F."/>
            <person name="Hennequin C."/>
            <person name="Jauniaux N."/>
            <person name="Joyet P."/>
            <person name="Kachouri R."/>
            <person name="Kerrest A."/>
            <person name="Koszul R."/>
            <person name="Lemaire M."/>
            <person name="Lesur I."/>
            <person name="Ma L."/>
            <person name="Muller H."/>
            <person name="Nicaud J.-M."/>
            <person name="Nikolski M."/>
            <person name="Oztas S."/>
            <person name="Ozier-Kalogeropoulos O."/>
            <person name="Pellenz S."/>
            <person name="Potier S."/>
            <person name="Richard G.-F."/>
            <person name="Straub M.-L."/>
            <person name="Suleau A."/>
            <person name="Swennen D."/>
            <person name="Tekaia F."/>
            <person name="Wesolowski-Louvel M."/>
            <person name="Westhof E."/>
            <person name="Wirth B."/>
            <person name="Zeniou-Meyer M."/>
            <person name="Zivanovic Y."/>
            <person name="Bolotin-Fukuhara M."/>
            <person name="Thierry A."/>
            <person name="Bouchier C."/>
            <person name="Caudron B."/>
            <person name="Scarpelli C."/>
            <person name="Gaillardin C."/>
            <person name="Weissenbach J."/>
            <person name="Wincker P."/>
            <person name="Souciet J.-L."/>
        </authorList>
    </citation>
    <scope>NUCLEOTIDE SEQUENCE [LARGE SCALE GENOMIC DNA]</scope>
    <source>
        <strain>ATCC 2001 / BCRC 20586 / JCM 3761 / NBRC 0622 / NRRL Y-65 / CBS 138</strain>
    </source>
</reference>
<accession>Q6FPE8</accession>
<evidence type="ECO:0000250" key="1">
    <source>
        <dbReference type="UniProtKB" id="P38206"/>
    </source>
</evidence>
<evidence type="ECO:0000255" key="2"/>
<evidence type="ECO:0000305" key="3"/>